<dbReference type="EMBL" id="AY446894">
    <property type="protein sequence ID" value="AAR31572.1"/>
    <property type="molecule type" value="Genomic_DNA"/>
</dbReference>
<dbReference type="RefSeq" id="YP_081466.1">
    <property type="nucleotide sequence ID" value="NC_006273.2"/>
</dbReference>
<dbReference type="SMR" id="Q6SWC4"/>
<dbReference type="GlyCosmos" id="Q6SWC4">
    <property type="glycosylation" value="10 sites, No reported glycans"/>
</dbReference>
<dbReference type="DNASU" id="3077507"/>
<dbReference type="GeneID" id="3077507"/>
<dbReference type="KEGG" id="vg:3077507"/>
<dbReference type="Proteomes" id="UP000000938">
    <property type="component" value="Segment"/>
</dbReference>
<dbReference type="GO" id="GO:0033644">
    <property type="term" value="C:host cell membrane"/>
    <property type="evidence" value="ECO:0007669"/>
    <property type="project" value="UniProtKB-SubCell"/>
</dbReference>
<dbReference type="GO" id="GO:0016020">
    <property type="term" value="C:membrane"/>
    <property type="evidence" value="ECO:0007669"/>
    <property type="project" value="UniProtKB-KW"/>
</dbReference>
<organism>
    <name type="scientific">Human cytomegalovirus (strain Merlin)</name>
    <name type="common">HHV-5</name>
    <name type="synonym">Human herpesvirus 5</name>
    <dbReference type="NCBI Taxonomy" id="295027"/>
    <lineage>
        <taxon>Viruses</taxon>
        <taxon>Duplodnaviria</taxon>
        <taxon>Heunggongvirae</taxon>
        <taxon>Peploviricota</taxon>
        <taxon>Herviviricetes</taxon>
        <taxon>Herpesvirales</taxon>
        <taxon>Orthoherpesviridae</taxon>
        <taxon>Betaherpesvirinae</taxon>
        <taxon>Cytomegalovirus</taxon>
        <taxon>Cytomegalovirus humanbeta5</taxon>
        <taxon>Human cytomegalovirus</taxon>
    </lineage>
</organism>
<gene>
    <name type="primary">UL6</name>
</gene>
<comment type="subcellular location">
    <subcellularLocation>
        <location evidence="2">Host membrane</location>
        <topology evidence="2">Single-pass membrane protein</topology>
    </subcellularLocation>
</comment>
<comment type="similarity">
    <text evidence="2">Belongs to the RL11 family.</text>
</comment>
<protein>
    <recommendedName>
        <fullName>Uncharacterized protein UL6</fullName>
    </recommendedName>
</protein>
<proteinExistence type="inferred from homology"/>
<sequence>MNGWAGVCLITHCLNTRSRTYVALNMLAFARTPRGVPSCLFNKVWVSRYALVLILMVCASESSTSWAVTSNGLPNCSTVTRTAGQDAELHGPAPLSCNVTQWGRYENGSTPVLWCTLRGSRMRVSLGHRVAFGCSWKTFFIYNVSESSGGTYYQKGYNCTDKHITLSCFNLTVVPRAVQSTTTVMTPTLVTNSTFSVSLVALRLTTNSSAFGHAIYQRQQRVENGTLSKNITNLAFTYGSWGVAMLLFAAVMVLVDLGLPQSAWRRWRSHVDDEERGLLM</sequence>
<organismHost>
    <name type="scientific">Homo sapiens</name>
    <name type="common">Human</name>
    <dbReference type="NCBI Taxonomy" id="9606"/>
</organismHost>
<accession>Q6SWC4</accession>
<accession>D2K3H6</accession>
<reference key="1">
    <citation type="journal article" date="2004" name="J. Gen. Virol.">
        <title>Genetic content of wild-type human cytomegalovirus.</title>
        <authorList>
            <person name="Dolan A."/>
            <person name="Cunningham C."/>
            <person name="Hector R.D."/>
            <person name="Hassan-Walker A.F."/>
            <person name="Lee L."/>
            <person name="Addison C."/>
            <person name="Dargan D.J."/>
            <person name="McGeoch D.J."/>
            <person name="Gatherer D."/>
            <person name="Emery V.C."/>
            <person name="Griffiths P.D."/>
            <person name="Sinzger C."/>
            <person name="McSharry B.P."/>
            <person name="Wilkinson G.W.G."/>
            <person name="Davison A.J."/>
        </authorList>
    </citation>
    <scope>NUCLEOTIDE SEQUENCE [LARGE SCALE GENOMIC DNA]</scope>
</reference>
<name>UL06_HCMVM</name>
<keyword id="KW-0325">Glycoprotein</keyword>
<keyword id="KW-1043">Host membrane</keyword>
<keyword id="KW-0472">Membrane</keyword>
<keyword id="KW-1185">Reference proteome</keyword>
<keyword id="KW-0812">Transmembrane</keyword>
<keyword id="KW-1133">Transmembrane helix</keyword>
<feature type="chain" id="PRO_0000417834" description="Uncharacterized protein UL6">
    <location>
        <begin position="1"/>
        <end position="280"/>
    </location>
</feature>
<feature type="transmembrane region" description="Helical" evidence="1">
    <location>
        <begin position="235"/>
        <end position="255"/>
    </location>
</feature>
<feature type="glycosylation site" description="N-linked (GlcNAc...) asparagine; by host" evidence="1">
    <location>
        <position position="75"/>
    </location>
</feature>
<feature type="glycosylation site" description="N-linked (GlcNAc...) asparagine; by host" evidence="1">
    <location>
        <position position="98"/>
    </location>
</feature>
<feature type="glycosylation site" description="N-linked (GlcNAc...) asparagine; by host" evidence="1">
    <location>
        <position position="107"/>
    </location>
</feature>
<feature type="glycosylation site" description="N-linked (GlcNAc...) asparagine; by host" evidence="1">
    <location>
        <position position="143"/>
    </location>
</feature>
<feature type="glycosylation site" description="N-linked (GlcNAc...) asparagine; by host" evidence="1">
    <location>
        <position position="158"/>
    </location>
</feature>
<feature type="glycosylation site" description="N-linked (GlcNAc...) asparagine; by host" evidence="1">
    <location>
        <position position="170"/>
    </location>
</feature>
<feature type="glycosylation site" description="N-linked (GlcNAc...) asparagine; by host" evidence="1">
    <location>
        <position position="192"/>
    </location>
</feature>
<feature type="glycosylation site" description="N-linked (GlcNAc...) asparagine; by host" evidence="1">
    <location>
        <position position="207"/>
    </location>
</feature>
<feature type="glycosylation site" description="N-linked (GlcNAc...) asparagine; by host" evidence="1">
    <location>
        <position position="224"/>
    </location>
</feature>
<feature type="glycosylation site" description="N-linked (GlcNAc...) asparagine; by host" evidence="1">
    <location>
        <position position="230"/>
    </location>
</feature>
<evidence type="ECO:0000255" key="1"/>
<evidence type="ECO:0000305" key="2"/>